<name>LSPA_SALPC</name>
<feature type="chain" id="PRO_1000123504" description="Lipoprotein signal peptidase">
    <location>
        <begin position="1"/>
        <end position="166"/>
    </location>
</feature>
<feature type="transmembrane region" description="Helical" evidence="1">
    <location>
        <begin position="12"/>
        <end position="32"/>
    </location>
</feature>
<feature type="transmembrane region" description="Helical" evidence="1">
    <location>
        <begin position="70"/>
        <end position="90"/>
    </location>
</feature>
<feature type="transmembrane region" description="Helical" evidence="1">
    <location>
        <begin position="102"/>
        <end position="122"/>
    </location>
</feature>
<feature type="transmembrane region" description="Helical" evidence="1">
    <location>
        <begin position="137"/>
        <end position="157"/>
    </location>
</feature>
<feature type="active site" evidence="1">
    <location>
        <position position="123"/>
    </location>
</feature>
<feature type="active site" evidence="1">
    <location>
        <position position="141"/>
    </location>
</feature>
<protein>
    <recommendedName>
        <fullName evidence="1">Lipoprotein signal peptidase</fullName>
        <ecNumber evidence="1">3.4.23.36</ecNumber>
    </recommendedName>
    <alternativeName>
        <fullName evidence="1">Prolipoprotein signal peptidase</fullName>
    </alternativeName>
    <alternativeName>
        <fullName evidence="1">Signal peptidase II</fullName>
        <shortName evidence="1">SPase II</shortName>
    </alternativeName>
</protein>
<accession>C0Q4I6</accession>
<comment type="function">
    <text evidence="1">This protein specifically catalyzes the removal of signal peptides from prolipoproteins.</text>
</comment>
<comment type="catalytic activity">
    <reaction evidence="1">
        <text>Release of signal peptides from bacterial membrane prolipoproteins. Hydrolyzes -Xaa-Yaa-Zaa-|-(S,diacylglyceryl)Cys-, in which Xaa is hydrophobic (preferably Leu), and Yaa (Ala or Ser) and Zaa (Gly or Ala) have small, neutral side chains.</text>
        <dbReference type="EC" id="3.4.23.36"/>
    </reaction>
</comment>
<comment type="pathway">
    <text evidence="1">Protein modification; lipoprotein biosynthesis (signal peptide cleavage).</text>
</comment>
<comment type="subcellular location">
    <subcellularLocation>
        <location evidence="1">Cell inner membrane</location>
        <topology evidence="1">Multi-pass membrane protein</topology>
    </subcellularLocation>
</comment>
<comment type="similarity">
    <text evidence="1">Belongs to the peptidase A8 family.</text>
</comment>
<dbReference type="EC" id="3.4.23.36" evidence="1"/>
<dbReference type="EMBL" id="CP000857">
    <property type="protein sequence ID" value="ACN44241.1"/>
    <property type="molecule type" value="Genomic_DNA"/>
</dbReference>
<dbReference type="RefSeq" id="WP_000042739.1">
    <property type="nucleotide sequence ID" value="NC_012125.1"/>
</dbReference>
<dbReference type="SMR" id="C0Q4I6"/>
<dbReference type="MEROPS" id="A08.001"/>
<dbReference type="KEGG" id="sei:SPC_0049"/>
<dbReference type="HOGENOM" id="CLU_083252_4_0_6"/>
<dbReference type="UniPathway" id="UPA00665"/>
<dbReference type="Proteomes" id="UP000001599">
    <property type="component" value="Chromosome"/>
</dbReference>
<dbReference type="GO" id="GO:0005886">
    <property type="term" value="C:plasma membrane"/>
    <property type="evidence" value="ECO:0007669"/>
    <property type="project" value="UniProtKB-SubCell"/>
</dbReference>
<dbReference type="GO" id="GO:0004190">
    <property type="term" value="F:aspartic-type endopeptidase activity"/>
    <property type="evidence" value="ECO:0007669"/>
    <property type="project" value="UniProtKB-UniRule"/>
</dbReference>
<dbReference type="GO" id="GO:0006508">
    <property type="term" value="P:proteolysis"/>
    <property type="evidence" value="ECO:0007669"/>
    <property type="project" value="UniProtKB-KW"/>
</dbReference>
<dbReference type="HAMAP" id="MF_00161">
    <property type="entry name" value="LspA"/>
    <property type="match status" value="1"/>
</dbReference>
<dbReference type="InterPro" id="IPR001872">
    <property type="entry name" value="Peptidase_A8"/>
</dbReference>
<dbReference type="NCBIfam" id="TIGR00077">
    <property type="entry name" value="lspA"/>
    <property type="match status" value="1"/>
</dbReference>
<dbReference type="PANTHER" id="PTHR33695">
    <property type="entry name" value="LIPOPROTEIN SIGNAL PEPTIDASE"/>
    <property type="match status" value="1"/>
</dbReference>
<dbReference type="PANTHER" id="PTHR33695:SF1">
    <property type="entry name" value="LIPOPROTEIN SIGNAL PEPTIDASE"/>
    <property type="match status" value="1"/>
</dbReference>
<dbReference type="Pfam" id="PF01252">
    <property type="entry name" value="Peptidase_A8"/>
    <property type="match status" value="1"/>
</dbReference>
<dbReference type="PRINTS" id="PR00781">
    <property type="entry name" value="LIPOSIGPTASE"/>
</dbReference>
<dbReference type="PROSITE" id="PS00855">
    <property type="entry name" value="SPASE_II"/>
    <property type="match status" value="1"/>
</dbReference>
<keyword id="KW-0064">Aspartyl protease</keyword>
<keyword id="KW-0997">Cell inner membrane</keyword>
<keyword id="KW-1003">Cell membrane</keyword>
<keyword id="KW-0378">Hydrolase</keyword>
<keyword id="KW-0472">Membrane</keyword>
<keyword id="KW-0645">Protease</keyword>
<keyword id="KW-0812">Transmembrane</keyword>
<keyword id="KW-1133">Transmembrane helix</keyword>
<evidence type="ECO:0000255" key="1">
    <source>
        <dbReference type="HAMAP-Rule" id="MF_00161"/>
    </source>
</evidence>
<sequence>MSKPLCSTGLRWLWLVVVVLIIDLGSKYLILQNFALGDTVGLFPSLNLHYARNYGAAFSFLADSGGWQRWFFAGIAIGICVILLVMMYRSKATQKLNNIAYALIIGGALGNLFDRLWHGFVVDMIDFYVGNWHFATFNLADSAICIGAALIVLEGFLPKPTAKEQA</sequence>
<proteinExistence type="inferred from homology"/>
<reference key="1">
    <citation type="journal article" date="2009" name="PLoS ONE">
        <title>Salmonella paratyphi C: genetic divergence from Salmonella choleraesuis and pathogenic convergence with Salmonella typhi.</title>
        <authorList>
            <person name="Liu W.-Q."/>
            <person name="Feng Y."/>
            <person name="Wang Y."/>
            <person name="Zou Q.-H."/>
            <person name="Chen F."/>
            <person name="Guo J.-T."/>
            <person name="Peng Y.-H."/>
            <person name="Jin Y."/>
            <person name="Li Y.-G."/>
            <person name="Hu S.-N."/>
            <person name="Johnston R.N."/>
            <person name="Liu G.-R."/>
            <person name="Liu S.-L."/>
        </authorList>
    </citation>
    <scope>NUCLEOTIDE SEQUENCE [LARGE SCALE GENOMIC DNA]</scope>
    <source>
        <strain>RKS4594</strain>
    </source>
</reference>
<gene>
    <name evidence="1" type="primary">lspA</name>
    <name type="ordered locus">SPC_0049</name>
</gene>
<organism>
    <name type="scientific">Salmonella paratyphi C (strain RKS4594)</name>
    <dbReference type="NCBI Taxonomy" id="476213"/>
    <lineage>
        <taxon>Bacteria</taxon>
        <taxon>Pseudomonadati</taxon>
        <taxon>Pseudomonadota</taxon>
        <taxon>Gammaproteobacteria</taxon>
        <taxon>Enterobacterales</taxon>
        <taxon>Enterobacteriaceae</taxon>
        <taxon>Salmonella</taxon>
    </lineage>
</organism>